<name>HPF1_MOUSE</name>
<feature type="chain" id="PRO_0000294447" description="Histone PARylation factor 1">
    <location>
        <begin position="1"/>
        <end position="346"/>
    </location>
</feature>
<feature type="region of interest" description="Interaction with PARP1" evidence="1">
    <location>
        <begin position="242"/>
        <end position="346"/>
    </location>
</feature>
<feature type="active site" description="Proton donor" evidence="1">
    <location>
        <position position="284"/>
    </location>
</feature>
<feature type="modified residue" description="N-acetylmethionine" evidence="1">
    <location>
        <position position="1"/>
    </location>
</feature>
<feature type="modified residue" description="N6-acetyllysine" evidence="5">
    <location>
        <position position="19"/>
    </location>
</feature>
<feature type="modified residue" description="N6-acetyllysine" evidence="1">
    <location>
        <position position="186"/>
    </location>
</feature>
<feature type="modified residue" description="N6-acetyllysine" evidence="1">
    <location>
        <position position="233"/>
    </location>
</feature>
<feature type="modified residue" description="PolyADP-ribosyl aspartic acid" evidence="1">
    <location>
        <position position="235"/>
    </location>
</feature>
<feature type="modified residue" description="ADP-ribosyltyrosine" evidence="1">
    <location>
        <position position="238"/>
    </location>
</feature>
<feature type="modified residue" description="PolyADP-ribosyl glutamic acid" evidence="1">
    <location>
        <position position="240"/>
    </location>
</feature>
<feature type="helix" evidence="6">
    <location>
        <begin position="37"/>
        <end position="45"/>
    </location>
</feature>
<feature type="helix" evidence="6">
    <location>
        <begin position="51"/>
        <end position="63"/>
    </location>
</feature>
<feature type="helix" evidence="6">
    <location>
        <begin position="68"/>
        <end position="70"/>
    </location>
</feature>
<feature type="helix" evidence="6">
    <location>
        <begin position="73"/>
        <end position="76"/>
    </location>
</feature>
<feature type="helix" evidence="6">
    <location>
        <begin position="83"/>
        <end position="88"/>
    </location>
</feature>
<feature type="helix" evidence="6">
    <location>
        <begin position="90"/>
        <end position="93"/>
    </location>
</feature>
<feature type="turn" evidence="6">
    <location>
        <begin position="102"/>
        <end position="106"/>
    </location>
</feature>
<feature type="strand" evidence="6">
    <location>
        <begin position="115"/>
        <end position="120"/>
    </location>
</feature>
<feature type="turn" evidence="6">
    <location>
        <begin position="123"/>
        <end position="126"/>
    </location>
</feature>
<feature type="strand" evidence="6">
    <location>
        <begin position="127"/>
        <end position="132"/>
    </location>
</feature>
<feature type="strand" evidence="6">
    <location>
        <begin position="141"/>
        <end position="147"/>
    </location>
</feature>
<feature type="turn" evidence="6">
    <location>
        <begin position="148"/>
        <end position="150"/>
    </location>
</feature>
<feature type="helix" evidence="6">
    <location>
        <begin position="161"/>
        <end position="173"/>
    </location>
</feature>
<feature type="helix" evidence="6">
    <location>
        <begin position="179"/>
        <end position="199"/>
    </location>
</feature>
<feature type="helix" evidence="6">
    <location>
        <begin position="208"/>
        <end position="215"/>
    </location>
</feature>
<feature type="strand" evidence="6">
    <location>
        <begin position="217"/>
        <end position="219"/>
    </location>
</feature>
<feature type="helix" evidence="6">
    <location>
        <begin position="245"/>
        <end position="257"/>
    </location>
</feature>
<feature type="helix" evidence="6">
    <location>
        <begin position="261"/>
        <end position="283"/>
    </location>
</feature>
<feature type="helix" evidence="6">
    <location>
        <begin position="288"/>
        <end position="300"/>
    </location>
</feature>
<feature type="helix" evidence="6">
    <location>
        <begin position="303"/>
        <end position="305"/>
    </location>
</feature>
<feature type="helix" evidence="6">
    <location>
        <begin position="306"/>
        <end position="319"/>
    </location>
</feature>
<feature type="helix" evidence="6">
    <location>
        <begin position="323"/>
        <end position="334"/>
    </location>
</feature>
<gene>
    <name evidence="3" type="primary">Hpf1</name>
</gene>
<sequence>MVGGGGKRRTAGAGPQCEKTVEVKKSKFSEADVSSDLRKEVENLYKLSLPEDFYHFWKFCEELDPEKPADALATSLGLRLVGPYDILAGKHKMKKKPTGLNCNLHWRFYYDPPEFQTIIIGDNKTQYHMGYFRDSPDELPVYVGTNEAKKNCIIIQNGDNVFAAIKLFLMKKLKEVTDRKKISILKNIDEKLTEAARKLGYSLEQRTVKMRQRDKKVVTKTFHGAGLVVPVDKNDVGYRELPETDADLKRICKAVVDAASDEERLKAFAPIQEMMTFVQFANDECDYGMGLELGMDLFCYGSHYFHKVAGQLLPLAYNLLKRDLFAKIIEDHLASRSEENIDQLAG</sequence>
<organism>
    <name type="scientific">Mus musculus</name>
    <name type="common">Mouse</name>
    <dbReference type="NCBI Taxonomy" id="10090"/>
    <lineage>
        <taxon>Eukaryota</taxon>
        <taxon>Metazoa</taxon>
        <taxon>Chordata</taxon>
        <taxon>Craniata</taxon>
        <taxon>Vertebrata</taxon>
        <taxon>Euteleostomi</taxon>
        <taxon>Mammalia</taxon>
        <taxon>Eutheria</taxon>
        <taxon>Euarchontoglires</taxon>
        <taxon>Glires</taxon>
        <taxon>Rodentia</taxon>
        <taxon>Myomorpha</taxon>
        <taxon>Muroidea</taxon>
        <taxon>Muridae</taxon>
        <taxon>Murinae</taxon>
        <taxon>Mus</taxon>
        <taxon>Mus</taxon>
    </lineage>
</organism>
<keyword id="KW-0002">3D-structure</keyword>
<keyword id="KW-0007">Acetylation</keyword>
<keyword id="KW-0013">ADP-ribosylation</keyword>
<keyword id="KW-0158">Chromosome</keyword>
<keyword id="KW-0227">DNA damage</keyword>
<keyword id="KW-0234">DNA repair</keyword>
<keyword id="KW-0539">Nucleus</keyword>
<keyword id="KW-1185">Reference proteome</keyword>
<dbReference type="EMBL" id="AK150453">
    <property type="protein sequence ID" value="BAE29573.1"/>
    <property type="molecule type" value="mRNA"/>
</dbReference>
<dbReference type="EMBL" id="AK157260">
    <property type="protein sequence ID" value="BAE34015.1"/>
    <property type="molecule type" value="mRNA"/>
</dbReference>
<dbReference type="EMBL" id="BC042740">
    <property type="protein sequence ID" value="AAH42740.1"/>
    <property type="molecule type" value="mRNA"/>
</dbReference>
<dbReference type="CCDS" id="CCDS52553.1"/>
<dbReference type="RefSeq" id="NP_082575.1">
    <property type="nucleotide sequence ID" value="NM_028299.3"/>
</dbReference>
<dbReference type="PDB" id="6M3H">
    <property type="method" value="X-ray"/>
    <property type="resolution" value="1.71 A"/>
    <property type="chains" value="A=1-346"/>
</dbReference>
<dbReference type="PDBsum" id="6M3H"/>
<dbReference type="SMR" id="Q8CFE2"/>
<dbReference type="BioGRID" id="215471">
    <property type="interactions" value="3"/>
</dbReference>
<dbReference type="FunCoup" id="Q8CFE2">
    <property type="interactions" value="2281"/>
</dbReference>
<dbReference type="IntAct" id="Q8CFE2">
    <property type="interactions" value="1"/>
</dbReference>
<dbReference type="MINT" id="Q8CFE2"/>
<dbReference type="STRING" id="10090.ENSMUSP00000047235"/>
<dbReference type="iPTMnet" id="Q8CFE2"/>
<dbReference type="PhosphoSitePlus" id="Q8CFE2"/>
<dbReference type="SwissPalm" id="Q8CFE2"/>
<dbReference type="jPOST" id="Q8CFE2"/>
<dbReference type="PaxDb" id="10090-ENSMUSP00000047235"/>
<dbReference type="PeptideAtlas" id="Q8CFE2"/>
<dbReference type="ProteomicsDB" id="273190"/>
<dbReference type="Pumba" id="Q8CFE2"/>
<dbReference type="Antibodypedia" id="50204">
    <property type="antibodies" value="56 antibodies from 10 providers"/>
</dbReference>
<dbReference type="Ensembl" id="ENSMUST00000037190.15">
    <property type="protein sequence ID" value="ENSMUSP00000047235.9"/>
    <property type="gene ID" value="ENSMUSG00000038005.16"/>
</dbReference>
<dbReference type="GeneID" id="72612"/>
<dbReference type="KEGG" id="mmu:72612"/>
<dbReference type="UCSC" id="uc009lti.2">
    <property type="organism name" value="mouse"/>
</dbReference>
<dbReference type="AGR" id="MGI:1919862"/>
<dbReference type="CTD" id="54969"/>
<dbReference type="MGI" id="MGI:1919862">
    <property type="gene designation" value="Hpf1"/>
</dbReference>
<dbReference type="VEuPathDB" id="HostDB:ENSMUSG00000038005"/>
<dbReference type="eggNOG" id="KOG3952">
    <property type="taxonomic scope" value="Eukaryota"/>
</dbReference>
<dbReference type="GeneTree" id="ENSGT00390000014876"/>
<dbReference type="HOGENOM" id="CLU_053037_0_0_1"/>
<dbReference type="InParanoid" id="Q8CFE2"/>
<dbReference type="OMA" id="HKELHML"/>
<dbReference type="OrthoDB" id="416496at2759"/>
<dbReference type="PhylomeDB" id="Q8CFE2"/>
<dbReference type="TreeFam" id="TF317026"/>
<dbReference type="BioGRID-ORCS" id="72612">
    <property type="hits" value="1 hit in 76 CRISPR screens"/>
</dbReference>
<dbReference type="ChiTaRS" id="Hpf1">
    <property type="organism name" value="mouse"/>
</dbReference>
<dbReference type="PRO" id="PR:Q8CFE2"/>
<dbReference type="Proteomes" id="UP000000589">
    <property type="component" value="Chromosome 8"/>
</dbReference>
<dbReference type="RNAct" id="Q8CFE2">
    <property type="molecule type" value="protein"/>
</dbReference>
<dbReference type="Bgee" id="ENSMUSG00000038005">
    <property type="expression patterns" value="Expressed in animal zygote and 257 other cell types or tissues"/>
</dbReference>
<dbReference type="ExpressionAtlas" id="Q8CFE2">
    <property type="expression patterns" value="baseline and differential"/>
</dbReference>
<dbReference type="GO" id="GO:0000785">
    <property type="term" value="C:chromatin"/>
    <property type="evidence" value="ECO:0000250"/>
    <property type="project" value="UniProtKB"/>
</dbReference>
<dbReference type="GO" id="GO:0005634">
    <property type="term" value="C:nucleus"/>
    <property type="evidence" value="ECO:0000250"/>
    <property type="project" value="UniProtKB"/>
</dbReference>
<dbReference type="GO" id="GO:0090734">
    <property type="term" value="C:site of DNA damage"/>
    <property type="evidence" value="ECO:0000250"/>
    <property type="project" value="UniProtKB"/>
</dbReference>
<dbReference type="GO" id="GO:0003682">
    <property type="term" value="F:chromatin binding"/>
    <property type="evidence" value="ECO:0000250"/>
    <property type="project" value="UniProtKB"/>
</dbReference>
<dbReference type="GO" id="GO:0042393">
    <property type="term" value="F:histone binding"/>
    <property type="evidence" value="ECO:0007669"/>
    <property type="project" value="Ensembl"/>
</dbReference>
<dbReference type="GO" id="GO:0140768">
    <property type="term" value="F:protein ADP-ribosyltransferase-substrate adaptor activity"/>
    <property type="evidence" value="ECO:0000250"/>
    <property type="project" value="UniProtKB"/>
</dbReference>
<dbReference type="GO" id="GO:0006974">
    <property type="term" value="P:DNA damage response"/>
    <property type="evidence" value="ECO:0000250"/>
    <property type="project" value="UniProtKB"/>
</dbReference>
<dbReference type="GO" id="GO:0140861">
    <property type="term" value="P:DNA repair-dependent chromatin remodeling"/>
    <property type="evidence" value="ECO:0000250"/>
    <property type="project" value="UniProtKB"/>
</dbReference>
<dbReference type="GO" id="GO:0006302">
    <property type="term" value="P:double-strand break repair"/>
    <property type="evidence" value="ECO:0007669"/>
    <property type="project" value="Ensembl"/>
</dbReference>
<dbReference type="InterPro" id="IPR019361">
    <property type="entry name" value="HPF1"/>
</dbReference>
<dbReference type="PANTHER" id="PTHR13386">
    <property type="entry name" value="HISTONE PARYLATION FACTOR 1"/>
    <property type="match status" value="1"/>
</dbReference>
<dbReference type="PANTHER" id="PTHR13386:SF1">
    <property type="entry name" value="HISTONE PARYLATION FACTOR 1"/>
    <property type="match status" value="1"/>
</dbReference>
<dbReference type="Pfam" id="PF10228">
    <property type="entry name" value="HPF1"/>
    <property type="match status" value="1"/>
</dbReference>
<evidence type="ECO:0000250" key="1">
    <source>
        <dbReference type="UniProtKB" id="Q9NWY4"/>
    </source>
</evidence>
<evidence type="ECO:0000305" key="2"/>
<evidence type="ECO:0000312" key="3">
    <source>
        <dbReference type="MGI" id="MGI:1919862"/>
    </source>
</evidence>
<evidence type="ECO:0007744" key="4">
    <source>
        <dbReference type="PDB" id="6M3H"/>
    </source>
</evidence>
<evidence type="ECO:0007744" key="5">
    <source>
    </source>
</evidence>
<evidence type="ECO:0007829" key="6">
    <source>
        <dbReference type="PDB" id="6M3H"/>
    </source>
</evidence>
<protein>
    <recommendedName>
        <fullName evidence="2">Histone PARylation factor 1</fullName>
    </recommendedName>
</protein>
<accession>Q8CFE2</accession>
<proteinExistence type="evidence at protein level"/>
<comment type="function">
    <text evidence="1">Cofactor for serine ADP-ribosylation that confers serine specificity on PARP1 and PARP2 and plays a key role in DNA damage response. Initiates the repair of double-strand DNA breaks: recruited to DNA damage sites by PARP1 and PARP2 and switches the amino acid specificity of PARP1 and PARP2 from aspartate or glutamate to serine residues, licensing serine ADP-ribosylation of target proteins. Serine ADP-ribosylation of target proteins, such as histones, promotes decompaction of chromatin and the recruitment of repair factors leading to the reparation of DNA strand breaks. Serine ADP-ribosylation of proteins constitutes the primary form of ADP-ribosylation of proteins in response to DNA damage. HPF1 acts by completing the active site of PARP1 and PARP2: forms a composite active site composed of residues from HPF1 and PARP1 or PARP2. While HPF1 promotes the initiation of serine ADP-ribosylation, it restricts the polymerase activity of PARP1 and PARP2 in order to limit the length of poly-ADP-ribose chains. HPF1 also promotes tyrosine ADP-ribosylation, probably by conferring tyrosine specificity on PARP1.</text>
</comment>
<comment type="subunit">
    <text evidence="1">Interacts with PARP1 (via the PARP catalytic domain). Interacts with PARP2 (via the PARP catalytic domain). Interacts with core nucleosomes in a PARP1- and PARP2-dependent manner.</text>
</comment>
<comment type="subcellular location">
    <subcellularLocation>
        <location evidence="1">Chromosome</location>
    </subcellularLocation>
    <subcellularLocation>
        <location evidence="1">Nucleus</location>
    </subcellularLocation>
    <text evidence="1">Localizes to DNA damage sites; chromatin localization is dependent on PARP1 and PARP2.</text>
</comment>
<comment type="similarity">
    <text evidence="2">Belongs to the HPF1 family.</text>
</comment>
<reference key="1">
    <citation type="journal article" date="2005" name="Science">
        <title>The transcriptional landscape of the mammalian genome.</title>
        <authorList>
            <person name="Carninci P."/>
            <person name="Kasukawa T."/>
            <person name="Katayama S."/>
            <person name="Gough J."/>
            <person name="Frith M.C."/>
            <person name="Maeda N."/>
            <person name="Oyama R."/>
            <person name="Ravasi T."/>
            <person name="Lenhard B."/>
            <person name="Wells C."/>
            <person name="Kodzius R."/>
            <person name="Shimokawa K."/>
            <person name="Bajic V.B."/>
            <person name="Brenner S.E."/>
            <person name="Batalov S."/>
            <person name="Forrest A.R."/>
            <person name="Zavolan M."/>
            <person name="Davis M.J."/>
            <person name="Wilming L.G."/>
            <person name="Aidinis V."/>
            <person name="Allen J.E."/>
            <person name="Ambesi-Impiombato A."/>
            <person name="Apweiler R."/>
            <person name="Aturaliya R.N."/>
            <person name="Bailey T.L."/>
            <person name="Bansal M."/>
            <person name="Baxter L."/>
            <person name="Beisel K.W."/>
            <person name="Bersano T."/>
            <person name="Bono H."/>
            <person name="Chalk A.M."/>
            <person name="Chiu K.P."/>
            <person name="Choudhary V."/>
            <person name="Christoffels A."/>
            <person name="Clutterbuck D.R."/>
            <person name="Crowe M.L."/>
            <person name="Dalla E."/>
            <person name="Dalrymple B.P."/>
            <person name="de Bono B."/>
            <person name="Della Gatta G."/>
            <person name="di Bernardo D."/>
            <person name="Down T."/>
            <person name="Engstrom P."/>
            <person name="Fagiolini M."/>
            <person name="Faulkner G."/>
            <person name="Fletcher C.F."/>
            <person name="Fukushima T."/>
            <person name="Furuno M."/>
            <person name="Futaki S."/>
            <person name="Gariboldi M."/>
            <person name="Georgii-Hemming P."/>
            <person name="Gingeras T.R."/>
            <person name="Gojobori T."/>
            <person name="Green R.E."/>
            <person name="Gustincich S."/>
            <person name="Harbers M."/>
            <person name="Hayashi Y."/>
            <person name="Hensch T.K."/>
            <person name="Hirokawa N."/>
            <person name="Hill D."/>
            <person name="Huminiecki L."/>
            <person name="Iacono M."/>
            <person name="Ikeo K."/>
            <person name="Iwama A."/>
            <person name="Ishikawa T."/>
            <person name="Jakt M."/>
            <person name="Kanapin A."/>
            <person name="Katoh M."/>
            <person name="Kawasawa Y."/>
            <person name="Kelso J."/>
            <person name="Kitamura H."/>
            <person name="Kitano H."/>
            <person name="Kollias G."/>
            <person name="Krishnan S.P."/>
            <person name="Kruger A."/>
            <person name="Kummerfeld S.K."/>
            <person name="Kurochkin I.V."/>
            <person name="Lareau L.F."/>
            <person name="Lazarevic D."/>
            <person name="Lipovich L."/>
            <person name="Liu J."/>
            <person name="Liuni S."/>
            <person name="McWilliam S."/>
            <person name="Madan Babu M."/>
            <person name="Madera M."/>
            <person name="Marchionni L."/>
            <person name="Matsuda H."/>
            <person name="Matsuzawa S."/>
            <person name="Miki H."/>
            <person name="Mignone F."/>
            <person name="Miyake S."/>
            <person name="Morris K."/>
            <person name="Mottagui-Tabar S."/>
            <person name="Mulder N."/>
            <person name="Nakano N."/>
            <person name="Nakauchi H."/>
            <person name="Ng P."/>
            <person name="Nilsson R."/>
            <person name="Nishiguchi S."/>
            <person name="Nishikawa S."/>
            <person name="Nori F."/>
            <person name="Ohara O."/>
            <person name="Okazaki Y."/>
            <person name="Orlando V."/>
            <person name="Pang K.C."/>
            <person name="Pavan W.J."/>
            <person name="Pavesi G."/>
            <person name="Pesole G."/>
            <person name="Petrovsky N."/>
            <person name="Piazza S."/>
            <person name="Reed J."/>
            <person name="Reid J.F."/>
            <person name="Ring B.Z."/>
            <person name="Ringwald M."/>
            <person name="Rost B."/>
            <person name="Ruan Y."/>
            <person name="Salzberg S.L."/>
            <person name="Sandelin A."/>
            <person name="Schneider C."/>
            <person name="Schoenbach C."/>
            <person name="Sekiguchi K."/>
            <person name="Semple C.A."/>
            <person name="Seno S."/>
            <person name="Sessa L."/>
            <person name="Sheng Y."/>
            <person name="Shibata Y."/>
            <person name="Shimada H."/>
            <person name="Shimada K."/>
            <person name="Silva D."/>
            <person name="Sinclair B."/>
            <person name="Sperling S."/>
            <person name="Stupka E."/>
            <person name="Sugiura K."/>
            <person name="Sultana R."/>
            <person name="Takenaka Y."/>
            <person name="Taki K."/>
            <person name="Tammoja K."/>
            <person name="Tan S.L."/>
            <person name="Tang S."/>
            <person name="Taylor M.S."/>
            <person name="Tegner J."/>
            <person name="Teichmann S.A."/>
            <person name="Ueda H.R."/>
            <person name="van Nimwegen E."/>
            <person name="Verardo R."/>
            <person name="Wei C.L."/>
            <person name="Yagi K."/>
            <person name="Yamanishi H."/>
            <person name="Zabarovsky E."/>
            <person name="Zhu S."/>
            <person name="Zimmer A."/>
            <person name="Hide W."/>
            <person name="Bult C."/>
            <person name="Grimmond S.M."/>
            <person name="Teasdale R.D."/>
            <person name="Liu E.T."/>
            <person name="Brusic V."/>
            <person name="Quackenbush J."/>
            <person name="Wahlestedt C."/>
            <person name="Mattick J.S."/>
            <person name="Hume D.A."/>
            <person name="Kai C."/>
            <person name="Sasaki D."/>
            <person name="Tomaru Y."/>
            <person name="Fukuda S."/>
            <person name="Kanamori-Katayama M."/>
            <person name="Suzuki M."/>
            <person name="Aoki J."/>
            <person name="Arakawa T."/>
            <person name="Iida J."/>
            <person name="Imamura K."/>
            <person name="Itoh M."/>
            <person name="Kato T."/>
            <person name="Kawaji H."/>
            <person name="Kawagashira N."/>
            <person name="Kawashima T."/>
            <person name="Kojima M."/>
            <person name="Kondo S."/>
            <person name="Konno H."/>
            <person name="Nakano K."/>
            <person name="Ninomiya N."/>
            <person name="Nishio T."/>
            <person name="Okada M."/>
            <person name="Plessy C."/>
            <person name="Shibata K."/>
            <person name="Shiraki T."/>
            <person name="Suzuki S."/>
            <person name="Tagami M."/>
            <person name="Waki K."/>
            <person name="Watahiki A."/>
            <person name="Okamura-Oho Y."/>
            <person name="Suzuki H."/>
            <person name="Kawai J."/>
            <person name="Hayashizaki Y."/>
        </authorList>
    </citation>
    <scope>NUCLEOTIDE SEQUENCE [LARGE SCALE MRNA]</scope>
    <source>
        <strain>C57BL/6J</strain>
        <strain>NOD</strain>
        <tissue>Bone marrow</tissue>
        <tissue>Spleen</tissue>
    </source>
</reference>
<reference key="2">
    <citation type="journal article" date="2004" name="Genome Res.">
        <title>The status, quality, and expansion of the NIH full-length cDNA project: the Mammalian Gene Collection (MGC).</title>
        <authorList>
            <consortium name="The MGC Project Team"/>
        </authorList>
    </citation>
    <scope>NUCLEOTIDE SEQUENCE [LARGE SCALE MRNA]</scope>
    <source>
        <strain>FVB/N</strain>
        <tissue>Mammary tumor</tissue>
    </source>
</reference>
<reference key="3">
    <citation type="journal article" date="2010" name="Cell">
        <title>A tissue-specific atlas of mouse protein phosphorylation and expression.</title>
        <authorList>
            <person name="Huttlin E.L."/>
            <person name="Jedrychowski M.P."/>
            <person name="Elias J.E."/>
            <person name="Goswami T."/>
            <person name="Rad R."/>
            <person name="Beausoleil S.A."/>
            <person name="Villen J."/>
            <person name="Haas W."/>
            <person name="Sowa M.E."/>
            <person name="Gygi S.P."/>
        </authorList>
    </citation>
    <scope>IDENTIFICATION BY MASS SPECTROMETRY [LARGE SCALE ANALYSIS]</scope>
    <source>
        <tissue>Lung</tissue>
        <tissue>Spleen</tissue>
        <tissue>Testis</tissue>
    </source>
</reference>
<reference key="4">
    <citation type="journal article" date="2013" name="Mol. Cell">
        <title>SIRT5-mediated lysine desuccinylation impacts diverse metabolic pathways.</title>
        <authorList>
            <person name="Park J."/>
            <person name="Chen Y."/>
            <person name="Tishkoff D.X."/>
            <person name="Peng C."/>
            <person name="Tan M."/>
            <person name="Dai L."/>
            <person name="Xie Z."/>
            <person name="Zhang Y."/>
            <person name="Zwaans B.M."/>
            <person name="Skinner M.E."/>
            <person name="Lombard D.B."/>
            <person name="Zhao Y."/>
        </authorList>
    </citation>
    <scope>ACETYLATION [LARGE SCALE ANALYSIS] AT LYS-19</scope>
    <scope>IDENTIFICATION BY MASS SPECTROMETRY [LARGE SCALE ANALYSIS]</scope>
    <source>
        <tissue>Embryonic fibroblast</tissue>
    </source>
</reference>
<reference evidence="4" key="5">
    <citation type="journal article" date="2021" name="Nat. Commun.">
        <title>HPF1 remodels the active site of PARP1 to enable the serine ADP-ribosylation of histones.</title>
        <authorList>
            <person name="Sun F.H."/>
            <person name="Zhao P."/>
            <person name="Zhang N."/>
            <person name="Kong L.L."/>
            <person name="Wong C.C.L."/>
            <person name="Yun C.H."/>
        </authorList>
    </citation>
    <scope>X-RAY CRYSTALLOGRAPHY (1.71 ANGSTROMS)</scope>
</reference>